<organism>
    <name type="scientific">Aromatoleum aromaticum (strain DSM 19018 / LMG 30748 / EbN1)</name>
    <name type="common">Azoarcus sp. (strain EbN1)</name>
    <dbReference type="NCBI Taxonomy" id="76114"/>
    <lineage>
        <taxon>Bacteria</taxon>
        <taxon>Pseudomonadati</taxon>
        <taxon>Pseudomonadota</taxon>
        <taxon>Betaproteobacteria</taxon>
        <taxon>Rhodocyclales</taxon>
        <taxon>Rhodocyclaceae</taxon>
        <taxon>Aromatoleum</taxon>
    </lineage>
</organism>
<keyword id="KW-0963">Cytoplasm</keyword>
<keyword id="KW-0413">Isomerase</keyword>
<keyword id="KW-0414">Isoprene biosynthesis</keyword>
<keyword id="KW-0460">Magnesium</keyword>
<keyword id="KW-0464">Manganese</keyword>
<keyword id="KW-0479">Metal-binding</keyword>
<keyword id="KW-1185">Reference proteome</keyword>
<proteinExistence type="inferred from homology"/>
<accession>Q5P011</accession>
<name>IDI1_AROAE</name>
<reference key="1">
    <citation type="journal article" date="2005" name="Arch. Microbiol.">
        <title>The genome sequence of an anaerobic aromatic-degrading denitrifying bacterium, strain EbN1.</title>
        <authorList>
            <person name="Rabus R."/>
            <person name="Kube M."/>
            <person name="Heider J."/>
            <person name="Beck A."/>
            <person name="Heitmann K."/>
            <person name="Widdel F."/>
            <person name="Reinhardt R."/>
        </authorList>
    </citation>
    <scope>NUCLEOTIDE SEQUENCE [LARGE SCALE GENOMIC DNA]</scope>
    <source>
        <strain>DSM 19018 / LMG 30748 / EbN1</strain>
    </source>
</reference>
<protein>
    <recommendedName>
        <fullName evidence="1">Isopentenyl-diphosphate Delta-isomerase 1</fullName>
        <shortName evidence="1">IPP isomerase 1</shortName>
        <ecNumber evidence="1">5.3.3.2</ecNumber>
    </recommendedName>
    <alternativeName>
        <fullName evidence="1">IPP:DMAPP isomerase 1</fullName>
    </alternativeName>
    <alternativeName>
        <fullName evidence="1">Isopentenyl pyrophosphate isomerase 1</fullName>
    </alternativeName>
</protein>
<gene>
    <name evidence="1" type="primary">idi1</name>
    <name type="ordered locus">AZOSEA32280</name>
    <name type="ORF">ebA5678</name>
</gene>
<sequence>MEDQVILVDENDTEIGVEGKMIAHRSGSLHRAISIFIFDSADRLLLQKRAASKYHSAGLWSNTCCSHPRPREECARAARRRLREEMGIACELDVKFGFVYRAVLTNHLIENEFDHVFFGRHDGDPVPNPDEAEDWKWVDLAWLRADLNERPHAYSFWLEACIDRVIACREEDRTRVA</sequence>
<feature type="chain" id="PRO_0000205241" description="Isopentenyl-diphosphate Delta-isomerase 1">
    <location>
        <begin position="1"/>
        <end position="177"/>
    </location>
</feature>
<feature type="domain" description="Nudix hydrolase">
    <location>
        <begin position="28"/>
        <end position="160"/>
    </location>
</feature>
<feature type="active site" evidence="1">
    <location>
        <position position="65"/>
    </location>
</feature>
<feature type="active site" evidence="1">
    <location>
        <position position="112"/>
    </location>
</feature>
<feature type="binding site" evidence="1">
    <location>
        <position position="24"/>
    </location>
    <ligand>
        <name>Mn(2+)</name>
        <dbReference type="ChEBI" id="CHEBI:29035"/>
    </ligand>
</feature>
<feature type="binding site" evidence="1">
    <location>
        <position position="30"/>
    </location>
    <ligand>
        <name>Mn(2+)</name>
        <dbReference type="ChEBI" id="CHEBI:29035"/>
    </ligand>
</feature>
<feature type="binding site" evidence="1">
    <location>
        <position position="65"/>
    </location>
    <ligand>
        <name>Mg(2+)</name>
        <dbReference type="ChEBI" id="CHEBI:18420"/>
    </ligand>
</feature>
<feature type="binding site" evidence="1">
    <location>
        <position position="67"/>
    </location>
    <ligand>
        <name>Mn(2+)</name>
        <dbReference type="ChEBI" id="CHEBI:29035"/>
    </ligand>
</feature>
<feature type="binding site" evidence="1">
    <location>
        <position position="85"/>
    </location>
    <ligand>
        <name>Mg(2+)</name>
        <dbReference type="ChEBI" id="CHEBI:18420"/>
    </ligand>
</feature>
<feature type="binding site" evidence="1">
    <location>
        <position position="110"/>
    </location>
    <ligand>
        <name>Mn(2+)</name>
        <dbReference type="ChEBI" id="CHEBI:29035"/>
    </ligand>
</feature>
<feature type="binding site" evidence="1">
    <location>
        <position position="112"/>
    </location>
    <ligand>
        <name>Mn(2+)</name>
        <dbReference type="ChEBI" id="CHEBI:29035"/>
    </ligand>
</feature>
<comment type="function">
    <text evidence="1">Catalyzes the 1,3-allylic rearrangement of the homoallylic substrate isopentenyl (IPP) to its highly electrophilic allylic isomer, dimethylallyl diphosphate (DMAPP).</text>
</comment>
<comment type="catalytic activity">
    <reaction evidence="1">
        <text>isopentenyl diphosphate = dimethylallyl diphosphate</text>
        <dbReference type="Rhea" id="RHEA:23284"/>
        <dbReference type="ChEBI" id="CHEBI:57623"/>
        <dbReference type="ChEBI" id="CHEBI:128769"/>
        <dbReference type="EC" id="5.3.3.2"/>
    </reaction>
</comment>
<comment type="cofactor">
    <cofactor evidence="1">
        <name>Mg(2+)</name>
        <dbReference type="ChEBI" id="CHEBI:18420"/>
    </cofactor>
    <text evidence="1">Binds 1 Mg(2+) ion per subunit. The magnesium ion binds only when substrate is bound.</text>
</comment>
<comment type="cofactor">
    <cofactor evidence="1">
        <name>Mn(2+)</name>
        <dbReference type="ChEBI" id="CHEBI:29035"/>
    </cofactor>
    <text evidence="1">Binds 1 Mn(2+) ion per subunit.</text>
</comment>
<comment type="pathway">
    <text evidence="1">Isoprenoid biosynthesis; dimethylallyl diphosphate biosynthesis; dimethylallyl diphosphate from isopentenyl diphosphate: step 1/1.</text>
</comment>
<comment type="subcellular location">
    <subcellularLocation>
        <location evidence="1">Cytoplasm</location>
    </subcellularLocation>
</comment>
<comment type="similarity">
    <text evidence="1">Belongs to the IPP isomerase type 1 family.</text>
</comment>
<evidence type="ECO:0000255" key="1">
    <source>
        <dbReference type="HAMAP-Rule" id="MF_00202"/>
    </source>
</evidence>
<dbReference type="EC" id="5.3.3.2" evidence="1"/>
<dbReference type="EMBL" id="CR555306">
    <property type="protein sequence ID" value="CAI09353.1"/>
    <property type="molecule type" value="Genomic_DNA"/>
</dbReference>
<dbReference type="RefSeq" id="WP_011239018.1">
    <property type="nucleotide sequence ID" value="NC_006513.1"/>
</dbReference>
<dbReference type="SMR" id="Q5P011"/>
<dbReference type="STRING" id="76114.ebA5678"/>
<dbReference type="KEGG" id="eba:ebA5678"/>
<dbReference type="eggNOG" id="COG1443">
    <property type="taxonomic scope" value="Bacteria"/>
</dbReference>
<dbReference type="HOGENOM" id="CLU_060552_2_1_4"/>
<dbReference type="OrthoDB" id="9809458at2"/>
<dbReference type="UniPathway" id="UPA00059">
    <property type="reaction ID" value="UER00104"/>
</dbReference>
<dbReference type="Proteomes" id="UP000006552">
    <property type="component" value="Chromosome"/>
</dbReference>
<dbReference type="GO" id="GO:0005737">
    <property type="term" value="C:cytoplasm"/>
    <property type="evidence" value="ECO:0007669"/>
    <property type="project" value="UniProtKB-SubCell"/>
</dbReference>
<dbReference type="GO" id="GO:0004452">
    <property type="term" value="F:isopentenyl-diphosphate delta-isomerase activity"/>
    <property type="evidence" value="ECO:0007669"/>
    <property type="project" value="UniProtKB-UniRule"/>
</dbReference>
<dbReference type="GO" id="GO:0046872">
    <property type="term" value="F:metal ion binding"/>
    <property type="evidence" value="ECO:0007669"/>
    <property type="project" value="UniProtKB-KW"/>
</dbReference>
<dbReference type="GO" id="GO:0050992">
    <property type="term" value="P:dimethylallyl diphosphate biosynthetic process"/>
    <property type="evidence" value="ECO:0007669"/>
    <property type="project" value="UniProtKB-UniRule"/>
</dbReference>
<dbReference type="GO" id="GO:0009240">
    <property type="term" value="P:isopentenyl diphosphate biosynthetic process"/>
    <property type="evidence" value="ECO:0007669"/>
    <property type="project" value="TreeGrafter"/>
</dbReference>
<dbReference type="CDD" id="cd02885">
    <property type="entry name" value="NUDIX_IPP_Isomerase"/>
    <property type="match status" value="1"/>
</dbReference>
<dbReference type="Gene3D" id="3.90.79.10">
    <property type="entry name" value="Nucleoside Triphosphate Pyrophosphohydrolase"/>
    <property type="match status" value="1"/>
</dbReference>
<dbReference type="HAMAP" id="MF_00202">
    <property type="entry name" value="Idi"/>
    <property type="match status" value="1"/>
</dbReference>
<dbReference type="InterPro" id="IPR056375">
    <property type="entry name" value="Idi_bact"/>
</dbReference>
<dbReference type="InterPro" id="IPR011876">
    <property type="entry name" value="IsopentenylPP_isomerase_typ1"/>
</dbReference>
<dbReference type="InterPro" id="IPR015797">
    <property type="entry name" value="NUDIX_hydrolase-like_dom_sf"/>
</dbReference>
<dbReference type="InterPro" id="IPR000086">
    <property type="entry name" value="NUDIX_hydrolase_dom"/>
</dbReference>
<dbReference type="NCBIfam" id="TIGR02150">
    <property type="entry name" value="IPP_isom_1"/>
    <property type="match status" value="1"/>
</dbReference>
<dbReference type="NCBIfam" id="NF002995">
    <property type="entry name" value="PRK03759.1"/>
    <property type="match status" value="1"/>
</dbReference>
<dbReference type="PANTHER" id="PTHR10885">
    <property type="entry name" value="ISOPENTENYL-DIPHOSPHATE DELTA-ISOMERASE"/>
    <property type="match status" value="1"/>
</dbReference>
<dbReference type="PANTHER" id="PTHR10885:SF0">
    <property type="entry name" value="ISOPENTENYL-DIPHOSPHATE DELTA-ISOMERASE"/>
    <property type="match status" value="1"/>
</dbReference>
<dbReference type="Pfam" id="PF00293">
    <property type="entry name" value="NUDIX"/>
    <property type="match status" value="1"/>
</dbReference>
<dbReference type="PIRSF" id="PIRSF018427">
    <property type="entry name" value="Isopntndiph_ism"/>
    <property type="match status" value="1"/>
</dbReference>
<dbReference type="SUPFAM" id="SSF55811">
    <property type="entry name" value="Nudix"/>
    <property type="match status" value="1"/>
</dbReference>
<dbReference type="PROSITE" id="PS51462">
    <property type="entry name" value="NUDIX"/>
    <property type="match status" value="1"/>
</dbReference>